<feature type="signal peptide" evidence="5">
    <location>
        <begin position="1"/>
        <end position="21"/>
    </location>
</feature>
<feature type="chain" id="PRO_0000011945" description="Acidic mammalian chitinase">
    <location>
        <begin position="22"/>
        <end position="473"/>
    </location>
</feature>
<feature type="domain" description="GH18" evidence="3">
    <location>
        <begin position="22"/>
        <end position="390"/>
    </location>
</feature>
<feature type="domain" description="Chitin-binding type-2" evidence="2">
    <location>
        <begin position="424"/>
        <end position="473"/>
    </location>
</feature>
<feature type="region of interest" description="Disordered" evidence="4">
    <location>
        <begin position="394"/>
        <end position="421"/>
    </location>
</feature>
<feature type="compositionally biased region" description="Gly residues" evidence="4">
    <location>
        <begin position="410"/>
        <end position="421"/>
    </location>
</feature>
<feature type="active site" description="Proton donor" evidence="3">
    <location>
        <position position="140"/>
    </location>
</feature>
<feature type="binding site" evidence="3">
    <location>
        <begin position="70"/>
        <end position="71"/>
    </location>
    <ligand>
        <name>chitin</name>
        <dbReference type="ChEBI" id="CHEBI:17029"/>
    </ligand>
</feature>
<feature type="binding site" evidence="3">
    <location>
        <begin position="97"/>
        <end position="100"/>
    </location>
    <ligand>
        <name>chitin</name>
        <dbReference type="ChEBI" id="CHEBI:17029"/>
    </ligand>
</feature>
<feature type="binding site" evidence="3">
    <location>
        <position position="141"/>
    </location>
    <ligand>
        <name>chitin</name>
        <dbReference type="ChEBI" id="CHEBI:17029"/>
    </ligand>
</feature>
<feature type="binding site" evidence="3">
    <location>
        <begin position="210"/>
        <end position="213"/>
    </location>
    <ligand>
        <name>chitin</name>
        <dbReference type="ChEBI" id="CHEBI:17029"/>
    </ligand>
</feature>
<feature type="binding site" evidence="3">
    <location>
        <position position="360"/>
    </location>
    <ligand>
        <name>chitin</name>
        <dbReference type="ChEBI" id="CHEBI:17029"/>
    </ligand>
</feature>
<feature type="disulfide bond" evidence="3">
    <location>
        <begin position="26"/>
        <end position="51"/>
    </location>
</feature>
<feature type="disulfide bond" evidence="2">
    <location>
        <begin position="49"/>
        <end position="394"/>
    </location>
</feature>
<feature type="disulfide bond" evidence="2">
    <location>
        <begin position="307"/>
        <end position="372"/>
    </location>
</feature>
<feature type="disulfide bond" evidence="2">
    <location>
        <begin position="457"/>
        <end position="470"/>
    </location>
</feature>
<feature type="mutagenesis site" description="Strongly reduced activity at low pH, with minor effect on activity at neutral pH." evidence="9">
    <original>H</original>
    <variation>N</variation>
    <location>
        <position position="208"/>
    </location>
</feature>
<feature type="sequence conflict" description="In Ref. 1; AAG60018." evidence="12" ref="1">
    <original>P</original>
    <variation>A</variation>
    <location>
        <position position="293"/>
    </location>
</feature>
<feature type="sequence conflict" description="In Ref. 3; ABK78778." evidence="12" ref="3">
    <original>T</original>
    <variation>S</variation>
    <location>
        <position position="405"/>
    </location>
</feature>
<feature type="strand" evidence="13">
    <location>
        <begin position="23"/>
        <end position="29"/>
    </location>
</feature>
<feature type="helix" evidence="13">
    <location>
        <begin position="32"/>
        <end position="34"/>
    </location>
</feature>
<feature type="helix" evidence="13">
    <location>
        <begin position="37"/>
        <end position="39"/>
    </location>
</feature>
<feature type="helix" evidence="13">
    <location>
        <begin position="43"/>
        <end position="45"/>
    </location>
</feature>
<feature type="strand" evidence="13">
    <location>
        <begin position="52"/>
        <end position="62"/>
    </location>
</feature>
<feature type="strand" evidence="13">
    <location>
        <begin position="65"/>
        <end position="67"/>
    </location>
</feature>
<feature type="helix" evidence="13">
    <location>
        <begin position="73"/>
        <end position="82"/>
    </location>
</feature>
<feature type="helix" evidence="13">
    <location>
        <begin position="83"/>
        <end position="86"/>
    </location>
</feature>
<feature type="strand" evidence="13">
    <location>
        <begin position="91"/>
        <end position="97"/>
    </location>
</feature>
<feature type="turn" evidence="13">
    <location>
        <begin position="99"/>
        <end position="101"/>
    </location>
</feature>
<feature type="helix" evidence="13">
    <location>
        <begin position="104"/>
        <end position="110"/>
    </location>
</feature>
<feature type="helix" evidence="13">
    <location>
        <begin position="113"/>
        <end position="130"/>
    </location>
</feature>
<feature type="strand" evidence="13">
    <location>
        <begin position="133"/>
        <end position="138"/>
    </location>
</feature>
<feature type="helix" evidence="13">
    <location>
        <begin position="151"/>
        <end position="173"/>
    </location>
</feature>
<feature type="strand" evidence="13">
    <location>
        <begin position="179"/>
        <end position="184"/>
    </location>
</feature>
<feature type="helix" evidence="13">
    <location>
        <begin position="188"/>
        <end position="194"/>
    </location>
</feature>
<feature type="helix" evidence="13">
    <location>
        <begin position="197"/>
        <end position="203"/>
    </location>
</feature>
<feature type="strand" evidence="13">
    <location>
        <begin position="205"/>
        <end position="209"/>
    </location>
</feature>
<feature type="helix" evidence="13">
    <location>
        <begin position="217"/>
        <end position="219"/>
    </location>
</feature>
<feature type="helix" evidence="13">
    <location>
        <begin position="236"/>
        <end position="240"/>
    </location>
</feature>
<feature type="helix" evidence="13">
    <location>
        <begin position="243"/>
        <end position="252"/>
    </location>
</feature>
<feature type="helix" evidence="13">
    <location>
        <begin position="257"/>
        <end position="259"/>
    </location>
</feature>
<feature type="strand" evidence="13">
    <location>
        <begin position="260"/>
        <end position="275"/>
    </location>
</feature>
<feature type="strand" evidence="13">
    <location>
        <begin position="284"/>
        <end position="288"/>
    </location>
</feature>
<feature type="turn" evidence="13">
    <location>
        <begin position="293"/>
        <end position="295"/>
    </location>
</feature>
<feature type="strand" evidence="13">
    <location>
        <begin position="300"/>
        <end position="302"/>
    </location>
</feature>
<feature type="helix" evidence="13">
    <location>
        <begin position="303"/>
        <end position="311"/>
    </location>
</feature>
<feature type="strand" evidence="13">
    <location>
        <begin position="315"/>
        <end position="319"/>
    </location>
</feature>
<feature type="turn" evidence="13">
    <location>
        <begin position="320"/>
        <end position="323"/>
    </location>
</feature>
<feature type="strand" evidence="13">
    <location>
        <begin position="324"/>
        <end position="329"/>
    </location>
</feature>
<feature type="strand" evidence="13">
    <location>
        <begin position="332"/>
        <end position="335"/>
    </location>
</feature>
<feature type="helix" evidence="13">
    <location>
        <begin position="339"/>
        <end position="351"/>
    </location>
</feature>
<feature type="strand" evidence="13">
    <location>
        <begin position="356"/>
        <end position="360"/>
    </location>
</feature>
<feature type="helix" evidence="13">
    <location>
        <begin position="362"/>
        <end position="364"/>
    </location>
</feature>
<feature type="strand" evidence="14">
    <location>
        <begin position="367"/>
        <end position="369"/>
    </location>
</feature>
<feature type="turn" evidence="13">
    <location>
        <begin position="370"/>
        <end position="372"/>
    </location>
</feature>
<feature type="helix" evidence="13">
    <location>
        <begin position="378"/>
        <end position="386"/>
    </location>
</feature>
<protein>
    <recommendedName>
        <fullName>Acidic mammalian chitinase</fullName>
        <shortName>AMCase</shortName>
        <ecNumber>3.2.1.14</ecNumber>
    </recommendedName>
    <alternativeName>
        <fullName>YNL</fullName>
    </alternativeName>
</protein>
<evidence type="ECO:0000250" key="1"/>
<evidence type="ECO:0000255" key="2">
    <source>
        <dbReference type="PROSITE-ProRule" id="PRU00144"/>
    </source>
</evidence>
<evidence type="ECO:0000255" key="3">
    <source>
        <dbReference type="PROSITE-ProRule" id="PRU01258"/>
    </source>
</evidence>
<evidence type="ECO:0000256" key="4">
    <source>
        <dbReference type="SAM" id="MobiDB-lite"/>
    </source>
</evidence>
<evidence type="ECO:0000269" key="5">
    <source>
    </source>
</evidence>
<evidence type="ECO:0000269" key="6">
    <source>
    </source>
</evidence>
<evidence type="ECO:0000269" key="7">
    <source>
    </source>
</evidence>
<evidence type="ECO:0000269" key="8">
    <source>
    </source>
</evidence>
<evidence type="ECO:0000269" key="9">
    <source>
    </source>
</evidence>
<evidence type="ECO:0000269" key="10">
    <source>
    </source>
</evidence>
<evidence type="ECO:0000269" key="11">
    <source>
    </source>
</evidence>
<evidence type="ECO:0000305" key="12"/>
<evidence type="ECO:0007829" key="13">
    <source>
        <dbReference type="PDB" id="8FG5"/>
    </source>
</evidence>
<evidence type="ECO:0007829" key="14">
    <source>
        <dbReference type="PDB" id="8FRG"/>
    </source>
</evidence>
<dbReference type="EC" id="3.2.1.14"/>
<dbReference type="EMBL" id="AF290003">
    <property type="protein sequence ID" value="AAG60018.1"/>
    <property type="molecule type" value="mRNA"/>
</dbReference>
<dbReference type="EMBL" id="DQ349202">
    <property type="protein sequence ID" value="ABC86699.1"/>
    <property type="molecule type" value="mRNA"/>
</dbReference>
<dbReference type="EMBL" id="EF094027">
    <property type="protein sequence ID" value="ABK78778.1"/>
    <property type="molecule type" value="mRNA"/>
</dbReference>
<dbReference type="EMBL" id="AK008633">
    <property type="protein sequence ID" value="BAB25795.1"/>
    <property type="molecule type" value="mRNA"/>
</dbReference>
<dbReference type="EMBL" id="AK160173">
    <property type="protein sequence ID" value="BAE35672.1"/>
    <property type="molecule type" value="mRNA"/>
</dbReference>
<dbReference type="EMBL" id="CH466608">
    <property type="protein sequence ID" value="EDL07527.1"/>
    <property type="molecule type" value="Genomic_DNA"/>
</dbReference>
<dbReference type="EMBL" id="BC011134">
    <property type="protein sequence ID" value="AAH11134.1"/>
    <property type="status" value="ALT_INIT"/>
    <property type="molecule type" value="mRNA"/>
</dbReference>
<dbReference type="EMBL" id="BC034548">
    <property type="protein sequence ID" value="AAH34548.1"/>
    <property type="molecule type" value="mRNA"/>
</dbReference>
<dbReference type="EMBL" id="AF154571">
    <property type="protein sequence ID" value="AAF31644.1"/>
    <property type="molecule type" value="mRNA"/>
</dbReference>
<dbReference type="CCDS" id="CCDS38585.1"/>
<dbReference type="RefSeq" id="NP_075675.2">
    <property type="nucleotide sequence ID" value="NM_023186.3"/>
</dbReference>
<dbReference type="PDB" id="8FG5">
    <property type="method" value="X-ray"/>
    <property type="resolution" value="1.30 A"/>
    <property type="chains" value="A=1-391"/>
</dbReference>
<dbReference type="PDB" id="8FG7">
    <property type="method" value="X-ray"/>
    <property type="resolution" value="1.64 A"/>
    <property type="chains" value="A=1-391"/>
</dbReference>
<dbReference type="PDB" id="8FR9">
    <property type="method" value="X-ray"/>
    <property type="resolution" value="1.50 A"/>
    <property type="chains" value="A/B=1-391"/>
</dbReference>
<dbReference type="PDB" id="8FRA">
    <property type="method" value="X-ray"/>
    <property type="resolution" value="1.95 A"/>
    <property type="chains" value="A/B/C/D=1-391"/>
</dbReference>
<dbReference type="PDB" id="8FRB">
    <property type="method" value="X-ray"/>
    <property type="resolution" value="1.70 A"/>
    <property type="chains" value="A/B/C/D=1-391"/>
</dbReference>
<dbReference type="PDB" id="8FRC">
    <property type="method" value="X-ray"/>
    <property type="resolution" value="1.92 A"/>
    <property type="chains" value="A/B=1-391"/>
</dbReference>
<dbReference type="PDB" id="8FRD">
    <property type="method" value="X-ray"/>
    <property type="resolution" value="1.68 A"/>
    <property type="chains" value="A/B=1-391"/>
</dbReference>
<dbReference type="PDB" id="8FRG">
    <property type="method" value="X-ray"/>
    <property type="resolution" value="1.74 A"/>
    <property type="chains" value="A/B=1-391"/>
</dbReference>
<dbReference type="PDB" id="8GCA">
    <property type="method" value="X-ray"/>
    <property type="resolution" value="1.70 A"/>
    <property type="chains" value="A/B=1-391"/>
</dbReference>
<dbReference type="PDBsum" id="8FG5"/>
<dbReference type="PDBsum" id="8FG7"/>
<dbReference type="PDBsum" id="8FR9"/>
<dbReference type="PDBsum" id="8FRA"/>
<dbReference type="PDBsum" id="8FRB"/>
<dbReference type="PDBsum" id="8FRC"/>
<dbReference type="PDBsum" id="8FRD"/>
<dbReference type="PDBsum" id="8FRG"/>
<dbReference type="PDBsum" id="8GCA"/>
<dbReference type="SMR" id="Q91XA9"/>
<dbReference type="FunCoup" id="Q91XA9">
    <property type="interactions" value="102"/>
</dbReference>
<dbReference type="IntAct" id="Q91XA9">
    <property type="interactions" value="1"/>
</dbReference>
<dbReference type="STRING" id="10090.ENSMUSP00000078134"/>
<dbReference type="BindingDB" id="Q91XA9"/>
<dbReference type="ChEMBL" id="CHEMBL2052027"/>
<dbReference type="GuidetoPHARMACOLOGY" id="2982"/>
<dbReference type="CAZy" id="CBM14">
    <property type="family name" value="Carbohydrate-Binding Module Family 14"/>
</dbReference>
<dbReference type="CAZy" id="GH18">
    <property type="family name" value="Glycoside Hydrolase Family 18"/>
</dbReference>
<dbReference type="iPTMnet" id="Q91XA9"/>
<dbReference type="PhosphoSitePlus" id="Q91XA9"/>
<dbReference type="PaxDb" id="10090-ENSMUSP00000078134"/>
<dbReference type="ProteomicsDB" id="281462"/>
<dbReference type="ABCD" id="Q91XA9">
    <property type="antibodies" value="4 sequenced antibodies"/>
</dbReference>
<dbReference type="DNASU" id="81600"/>
<dbReference type="Ensembl" id="ENSMUST00000079132.12">
    <property type="protein sequence ID" value="ENSMUSP00000078134.6"/>
    <property type="gene ID" value="ENSMUSG00000062778.13"/>
</dbReference>
<dbReference type="GeneID" id="81600"/>
<dbReference type="KEGG" id="mmu:81600"/>
<dbReference type="UCSC" id="uc008qvv.1">
    <property type="organism name" value="mouse"/>
</dbReference>
<dbReference type="AGR" id="MGI:1932052"/>
<dbReference type="CTD" id="81600"/>
<dbReference type="MGI" id="MGI:1932052">
    <property type="gene designation" value="Chia1"/>
</dbReference>
<dbReference type="VEuPathDB" id="HostDB:ENSMUSG00000062778"/>
<dbReference type="eggNOG" id="KOG2806">
    <property type="taxonomic scope" value="Eukaryota"/>
</dbReference>
<dbReference type="GeneTree" id="ENSGT00940000154557"/>
<dbReference type="HOGENOM" id="CLU_002833_3_1_1"/>
<dbReference type="InParanoid" id="Q91XA9"/>
<dbReference type="OMA" id="WMGNFTA"/>
<dbReference type="OrthoDB" id="76388at2759"/>
<dbReference type="PhylomeDB" id="Q91XA9"/>
<dbReference type="TreeFam" id="TF315610"/>
<dbReference type="Reactome" id="R-MMU-189085">
    <property type="pathway name" value="Digestion of dietary carbohydrate"/>
</dbReference>
<dbReference type="BioGRID-ORCS" id="81600">
    <property type="hits" value="2 hits in 77 CRISPR screens"/>
</dbReference>
<dbReference type="ChiTaRS" id="Chia1">
    <property type="organism name" value="mouse"/>
</dbReference>
<dbReference type="PRO" id="PR:Q91XA9"/>
<dbReference type="Proteomes" id="UP000000589">
    <property type="component" value="Chromosome 3"/>
</dbReference>
<dbReference type="RNAct" id="Q91XA9">
    <property type="molecule type" value="protein"/>
</dbReference>
<dbReference type="Bgee" id="ENSMUSG00000062778">
    <property type="expression patterns" value="Expressed in epithelium of stomach and 64 other cell types or tissues"/>
</dbReference>
<dbReference type="ExpressionAtlas" id="Q91XA9">
    <property type="expression patterns" value="baseline and differential"/>
</dbReference>
<dbReference type="GO" id="GO:0005737">
    <property type="term" value="C:cytoplasm"/>
    <property type="evidence" value="ECO:0000314"/>
    <property type="project" value="UniProtKB"/>
</dbReference>
<dbReference type="GO" id="GO:0005615">
    <property type="term" value="C:extracellular space"/>
    <property type="evidence" value="ECO:0000250"/>
    <property type="project" value="UniProtKB"/>
</dbReference>
<dbReference type="GO" id="GO:0008061">
    <property type="term" value="F:chitin binding"/>
    <property type="evidence" value="ECO:0000314"/>
    <property type="project" value="UniProtKB"/>
</dbReference>
<dbReference type="GO" id="GO:0004568">
    <property type="term" value="F:chitinase activity"/>
    <property type="evidence" value="ECO:0000314"/>
    <property type="project" value="UniProtKB"/>
</dbReference>
<dbReference type="GO" id="GO:0008843">
    <property type="term" value="F:endochitinase activity"/>
    <property type="evidence" value="ECO:0007669"/>
    <property type="project" value="UniProtKB-EC"/>
</dbReference>
<dbReference type="GO" id="GO:0006915">
    <property type="term" value="P:apoptotic process"/>
    <property type="evidence" value="ECO:0007669"/>
    <property type="project" value="UniProtKB-KW"/>
</dbReference>
<dbReference type="GO" id="GO:0006032">
    <property type="term" value="P:chitin catabolic process"/>
    <property type="evidence" value="ECO:0000314"/>
    <property type="project" value="UniProtKB"/>
</dbReference>
<dbReference type="GO" id="GO:0002376">
    <property type="term" value="P:immune system process"/>
    <property type="evidence" value="ECO:0007669"/>
    <property type="project" value="UniProtKB-KW"/>
</dbReference>
<dbReference type="GO" id="GO:0000272">
    <property type="term" value="P:polysaccharide catabolic process"/>
    <property type="evidence" value="ECO:0007669"/>
    <property type="project" value="UniProtKB-KW"/>
</dbReference>
<dbReference type="GO" id="GO:0032722">
    <property type="term" value="P:positive regulation of chemokine production"/>
    <property type="evidence" value="ECO:0000250"/>
    <property type="project" value="UniProtKB"/>
</dbReference>
<dbReference type="GO" id="GO:0002532">
    <property type="term" value="P:production of molecular mediator involved in inflammatory response"/>
    <property type="evidence" value="ECO:0000250"/>
    <property type="project" value="UniProtKB"/>
</dbReference>
<dbReference type="CDD" id="cd02872">
    <property type="entry name" value="GH18_chitolectin_chitotriosidase"/>
    <property type="match status" value="1"/>
</dbReference>
<dbReference type="FunFam" id="2.170.140.10:FF:000001">
    <property type="entry name" value="Acidic mammalian chitinase"/>
    <property type="match status" value="1"/>
</dbReference>
<dbReference type="FunFam" id="3.20.20.80:FF:000007">
    <property type="entry name" value="Acidic mammalian chitinase"/>
    <property type="match status" value="1"/>
</dbReference>
<dbReference type="FunFam" id="3.20.20.80:FF:000081">
    <property type="entry name" value="Chitinase 1"/>
    <property type="match status" value="1"/>
</dbReference>
<dbReference type="FunFam" id="3.10.50.10:FF:000001">
    <property type="entry name" value="Chitinase 3-like 1"/>
    <property type="match status" value="1"/>
</dbReference>
<dbReference type="Gene3D" id="3.10.50.10">
    <property type="match status" value="1"/>
</dbReference>
<dbReference type="Gene3D" id="2.170.140.10">
    <property type="entry name" value="Chitin binding domain"/>
    <property type="match status" value="1"/>
</dbReference>
<dbReference type="Gene3D" id="3.20.20.80">
    <property type="entry name" value="Glycosidases"/>
    <property type="match status" value="1"/>
</dbReference>
<dbReference type="InterPro" id="IPR002557">
    <property type="entry name" value="Chitin-bd_dom"/>
</dbReference>
<dbReference type="InterPro" id="IPR036508">
    <property type="entry name" value="Chitin-bd_dom_sf"/>
</dbReference>
<dbReference type="InterPro" id="IPR011583">
    <property type="entry name" value="Chitinase_II/V-like_cat"/>
</dbReference>
<dbReference type="InterPro" id="IPR029070">
    <property type="entry name" value="Chitinase_insertion_sf"/>
</dbReference>
<dbReference type="InterPro" id="IPR001223">
    <property type="entry name" value="Glyco_hydro18_cat"/>
</dbReference>
<dbReference type="InterPro" id="IPR001579">
    <property type="entry name" value="Glyco_hydro_18_chit_AS"/>
</dbReference>
<dbReference type="InterPro" id="IPR017853">
    <property type="entry name" value="Glycoside_hydrolase_SF"/>
</dbReference>
<dbReference type="InterPro" id="IPR050314">
    <property type="entry name" value="Glycosyl_Hydrlase_18"/>
</dbReference>
<dbReference type="PANTHER" id="PTHR11177:SF188">
    <property type="entry name" value="ACIDIC MAMMALIAN CHITINASE"/>
    <property type="match status" value="1"/>
</dbReference>
<dbReference type="PANTHER" id="PTHR11177">
    <property type="entry name" value="CHITINASE"/>
    <property type="match status" value="1"/>
</dbReference>
<dbReference type="Pfam" id="PF01607">
    <property type="entry name" value="CBM_14"/>
    <property type="match status" value="1"/>
</dbReference>
<dbReference type="Pfam" id="PF00704">
    <property type="entry name" value="Glyco_hydro_18"/>
    <property type="match status" value="1"/>
</dbReference>
<dbReference type="SMART" id="SM00494">
    <property type="entry name" value="ChtBD2"/>
    <property type="match status" value="1"/>
</dbReference>
<dbReference type="SMART" id="SM00636">
    <property type="entry name" value="Glyco_18"/>
    <property type="match status" value="1"/>
</dbReference>
<dbReference type="SUPFAM" id="SSF51445">
    <property type="entry name" value="(Trans)glycosidases"/>
    <property type="match status" value="1"/>
</dbReference>
<dbReference type="SUPFAM" id="SSF54556">
    <property type="entry name" value="Chitinase insertion domain"/>
    <property type="match status" value="1"/>
</dbReference>
<dbReference type="SUPFAM" id="SSF57625">
    <property type="entry name" value="Invertebrate chitin-binding proteins"/>
    <property type="match status" value="1"/>
</dbReference>
<dbReference type="PROSITE" id="PS50940">
    <property type="entry name" value="CHIT_BIND_II"/>
    <property type="match status" value="1"/>
</dbReference>
<dbReference type="PROSITE" id="PS01095">
    <property type="entry name" value="GH18_1"/>
    <property type="match status" value="1"/>
</dbReference>
<dbReference type="PROSITE" id="PS51910">
    <property type="entry name" value="GH18_2"/>
    <property type="match status" value="1"/>
</dbReference>
<gene>
    <name type="primary">Chia</name>
    <name type="synonym">Chia1</name>
</gene>
<sequence length="473" mass="52003">MAKLLLVTGLALLLNAQLGSAYNLICYFTNWAQYRPGLGSFKPDDINPCLCTHLIYAFAGMQNNEITTIEWNDVTLYKAFNDLKNRNSKLKTLLAIGGWNFGTAPFTTMVSTSQNRQTFITSVIKFLRQYGFDGLDLDWEYPGSRGSPPQDKHLFTVLVKEMREAFEQEAIESNRPRLMVTAAVAGGISNIQAGYEIPELSKYLDFIHVMTYDLHGSWEGYTGENSPLYKYPTETGSNAYLNVDYVMNYWKNNGAPAEKLIVGFPEYGHTFILRNPSDNGIGAPTSGDGPAGPYTRQAGFWAYYEICTFLRSGATEVWDASQEVPYAYKANEWLGYDNIKSFSVKAQWLKQNNFGGAMIWAIDLDDFTGSFCDQGKFPLTSTLNKALGISTEGCTAPDVPSEPVTTPPGSGSGGGSSGGSSGGSGFCADKADGLYPVADDRNAFWQCINGITYQQHCQAGLVFDTSCNCCNWP</sequence>
<keyword id="KW-0002">3D-structure</keyword>
<keyword id="KW-0053">Apoptosis</keyword>
<keyword id="KW-0119">Carbohydrate metabolism</keyword>
<keyword id="KW-0146">Chitin degradation</keyword>
<keyword id="KW-0147">Chitin-binding</keyword>
<keyword id="KW-0963">Cytoplasm</keyword>
<keyword id="KW-0903">Direct protein sequencing</keyword>
<keyword id="KW-1015">Disulfide bond</keyword>
<keyword id="KW-0326">Glycosidase</keyword>
<keyword id="KW-0378">Hydrolase</keyword>
<keyword id="KW-0391">Immunity</keyword>
<keyword id="KW-0395">Inflammatory response</keyword>
<keyword id="KW-0624">Polysaccharide degradation</keyword>
<keyword id="KW-1185">Reference proteome</keyword>
<keyword id="KW-0964">Secreted</keyword>
<keyword id="KW-0732">Signal</keyword>
<reference key="1">
    <citation type="journal article" date="2001" name="J. Biol. Chem.">
        <title>Identification of a novel acidic mammalian chitinase distinct from chitotriosidase.</title>
        <authorList>
            <person name="Boot R.G."/>
            <person name="Blommaart E.F.C."/>
            <person name="Swart E."/>
            <person name="Ghauharali-van der Vlugt K."/>
            <person name="Bijl N."/>
            <person name="Moe C."/>
            <person name="Place A."/>
            <person name="Aerts J.M.F.G."/>
        </authorList>
    </citation>
    <scope>NUCLEOTIDE SEQUENCE [MRNA]</scope>
    <scope>PROTEIN SEQUENCE OF 22-43</scope>
    <scope>TISSUE SPECIFICITY</scope>
    <scope>FUNCTION</scope>
    <source>
        <strain>BALB/cJ</strain>
        <tissue>Lung</tissue>
    </source>
</reference>
<reference key="2">
    <citation type="submission" date="2005-12" db="EMBL/GenBank/DDBJ databases">
        <title>Down-regulation of AMcase by siRNA in BALB/c mice.</title>
        <authorList>
            <person name="Shen C.-R."/>
            <person name="Liu C.-L."/>
            <person name="Yang C.-J."/>
            <person name="Liu Y.-K."/>
        </authorList>
    </citation>
    <scope>NUCLEOTIDE SEQUENCE [MRNA]</scope>
    <source>
        <strain>BALB/cJ</strain>
        <tissue>Lung</tissue>
    </source>
</reference>
<reference key="3">
    <citation type="submission" date="2006-10" db="EMBL/GenBank/DDBJ databases">
        <title>Identification of a novel mutant strain of Mus musculus acidic mammalian chitinase.</title>
        <authorList>
            <person name="Ling C."/>
            <person name="Zhu S."/>
        </authorList>
    </citation>
    <scope>NUCLEOTIDE SEQUENCE [MRNA]</scope>
    <source>
        <strain>BALB/cJ</strain>
        <tissue>Stomach</tissue>
    </source>
</reference>
<reference key="4">
    <citation type="journal article" date="2005" name="Science">
        <title>The transcriptional landscape of the mammalian genome.</title>
        <authorList>
            <person name="Carninci P."/>
            <person name="Kasukawa T."/>
            <person name="Katayama S."/>
            <person name="Gough J."/>
            <person name="Frith M.C."/>
            <person name="Maeda N."/>
            <person name="Oyama R."/>
            <person name="Ravasi T."/>
            <person name="Lenhard B."/>
            <person name="Wells C."/>
            <person name="Kodzius R."/>
            <person name="Shimokawa K."/>
            <person name="Bajic V.B."/>
            <person name="Brenner S.E."/>
            <person name="Batalov S."/>
            <person name="Forrest A.R."/>
            <person name="Zavolan M."/>
            <person name="Davis M.J."/>
            <person name="Wilming L.G."/>
            <person name="Aidinis V."/>
            <person name="Allen J.E."/>
            <person name="Ambesi-Impiombato A."/>
            <person name="Apweiler R."/>
            <person name="Aturaliya R.N."/>
            <person name="Bailey T.L."/>
            <person name="Bansal M."/>
            <person name="Baxter L."/>
            <person name="Beisel K.W."/>
            <person name="Bersano T."/>
            <person name="Bono H."/>
            <person name="Chalk A.M."/>
            <person name="Chiu K.P."/>
            <person name="Choudhary V."/>
            <person name="Christoffels A."/>
            <person name="Clutterbuck D.R."/>
            <person name="Crowe M.L."/>
            <person name="Dalla E."/>
            <person name="Dalrymple B.P."/>
            <person name="de Bono B."/>
            <person name="Della Gatta G."/>
            <person name="di Bernardo D."/>
            <person name="Down T."/>
            <person name="Engstrom P."/>
            <person name="Fagiolini M."/>
            <person name="Faulkner G."/>
            <person name="Fletcher C.F."/>
            <person name="Fukushima T."/>
            <person name="Furuno M."/>
            <person name="Futaki S."/>
            <person name="Gariboldi M."/>
            <person name="Georgii-Hemming P."/>
            <person name="Gingeras T.R."/>
            <person name="Gojobori T."/>
            <person name="Green R.E."/>
            <person name="Gustincich S."/>
            <person name="Harbers M."/>
            <person name="Hayashi Y."/>
            <person name="Hensch T.K."/>
            <person name="Hirokawa N."/>
            <person name="Hill D."/>
            <person name="Huminiecki L."/>
            <person name="Iacono M."/>
            <person name="Ikeo K."/>
            <person name="Iwama A."/>
            <person name="Ishikawa T."/>
            <person name="Jakt M."/>
            <person name="Kanapin A."/>
            <person name="Katoh M."/>
            <person name="Kawasawa Y."/>
            <person name="Kelso J."/>
            <person name="Kitamura H."/>
            <person name="Kitano H."/>
            <person name="Kollias G."/>
            <person name="Krishnan S.P."/>
            <person name="Kruger A."/>
            <person name="Kummerfeld S.K."/>
            <person name="Kurochkin I.V."/>
            <person name="Lareau L.F."/>
            <person name="Lazarevic D."/>
            <person name="Lipovich L."/>
            <person name="Liu J."/>
            <person name="Liuni S."/>
            <person name="McWilliam S."/>
            <person name="Madan Babu M."/>
            <person name="Madera M."/>
            <person name="Marchionni L."/>
            <person name="Matsuda H."/>
            <person name="Matsuzawa S."/>
            <person name="Miki H."/>
            <person name="Mignone F."/>
            <person name="Miyake S."/>
            <person name="Morris K."/>
            <person name="Mottagui-Tabar S."/>
            <person name="Mulder N."/>
            <person name="Nakano N."/>
            <person name="Nakauchi H."/>
            <person name="Ng P."/>
            <person name="Nilsson R."/>
            <person name="Nishiguchi S."/>
            <person name="Nishikawa S."/>
            <person name="Nori F."/>
            <person name="Ohara O."/>
            <person name="Okazaki Y."/>
            <person name="Orlando V."/>
            <person name="Pang K.C."/>
            <person name="Pavan W.J."/>
            <person name="Pavesi G."/>
            <person name="Pesole G."/>
            <person name="Petrovsky N."/>
            <person name="Piazza S."/>
            <person name="Reed J."/>
            <person name="Reid J.F."/>
            <person name="Ring B.Z."/>
            <person name="Ringwald M."/>
            <person name="Rost B."/>
            <person name="Ruan Y."/>
            <person name="Salzberg S.L."/>
            <person name="Sandelin A."/>
            <person name="Schneider C."/>
            <person name="Schoenbach C."/>
            <person name="Sekiguchi K."/>
            <person name="Semple C.A."/>
            <person name="Seno S."/>
            <person name="Sessa L."/>
            <person name="Sheng Y."/>
            <person name="Shibata Y."/>
            <person name="Shimada H."/>
            <person name="Shimada K."/>
            <person name="Silva D."/>
            <person name="Sinclair B."/>
            <person name="Sperling S."/>
            <person name="Stupka E."/>
            <person name="Sugiura K."/>
            <person name="Sultana R."/>
            <person name="Takenaka Y."/>
            <person name="Taki K."/>
            <person name="Tammoja K."/>
            <person name="Tan S.L."/>
            <person name="Tang S."/>
            <person name="Taylor M.S."/>
            <person name="Tegner J."/>
            <person name="Teichmann S.A."/>
            <person name="Ueda H.R."/>
            <person name="van Nimwegen E."/>
            <person name="Verardo R."/>
            <person name="Wei C.L."/>
            <person name="Yagi K."/>
            <person name="Yamanishi H."/>
            <person name="Zabarovsky E."/>
            <person name="Zhu S."/>
            <person name="Zimmer A."/>
            <person name="Hide W."/>
            <person name="Bult C."/>
            <person name="Grimmond S.M."/>
            <person name="Teasdale R.D."/>
            <person name="Liu E.T."/>
            <person name="Brusic V."/>
            <person name="Quackenbush J."/>
            <person name="Wahlestedt C."/>
            <person name="Mattick J.S."/>
            <person name="Hume D.A."/>
            <person name="Kai C."/>
            <person name="Sasaki D."/>
            <person name="Tomaru Y."/>
            <person name="Fukuda S."/>
            <person name="Kanamori-Katayama M."/>
            <person name="Suzuki M."/>
            <person name="Aoki J."/>
            <person name="Arakawa T."/>
            <person name="Iida J."/>
            <person name="Imamura K."/>
            <person name="Itoh M."/>
            <person name="Kato T."/>
            <person name="Kawaji H."/>
            <person name="Kawagashira N."/>
            <person name="Kawashima T."/>
            <person name="Kojima M."/>
            <person name="Kondo S."/>
            <person name="Konno H."/>
            <person name="Nakano K."/>
            <person name="Ninomiya N."/>
            <person name="Nishio T."/>
            <person name="Okada M."/>
            <person name="Plessy C."/>
            <person name="Shibata K."/>
            <person name="Shiraki T."/>
            <person name="Suzuki S."/>
            <person name="Tagami M."/>
            <person name="Waki K."/>
            <person name="Watahiki A."/>
            <person name="Okamura-Oho Y."/>
            <person name="Suzuki H."/>
            <person name="Kawai J."/>
            <person name="Hayashizaki Y."/>
        </authorList>
    </citation>
    <scope>NUCLEOTIDE SEQUENCE [LARGE SCALE MRNA]</scope>
    <source>
        <strain>C57BL/6J</strain>
        <strain>NOD</strain>
        <tissue>Stomach</tissue>
    </source>
</reference>
<reference key="5">
    <citation type="submission" date="2005-07" db="EMBL/GenBank/DDBJ databases">
        <authorList>
            <person name="Mural R.J."/>
            <person name="Adams M.D."/>
            <person name="Myers E.W."/>
            <person name="Smith H.O."/>
            <person name="Venter J.C."/>
        </authorList>
    </citation>
    <scope>NUCLEOTIDE SEQUENCE [LARGE SCALE GENOMIC DNA]</scope>
</reference>
<reference key="6">
    <citation type="journal article" date="2004" name="Genome Res.">
        <title>The status, quality, and expansion of the NIH full-length cDNA project: the Mammalian Gene Collection (MGC).</title>
        <authorList>
            <consortium name="The MGC Project Team"/>
        </authorList>
    </citation>
    <scope>NUCLEOTIDE SEQUENCE [LARGE SCALE MRNA]</scope>
    <source>
        <tissue>Salivary gland</tissue>
    </source>
</reference>
<reference key="7">
    <citation type="submission" date="1999-05" db="EMBL/GenBank/DDBJ databases">
        <title>YNL, a putative mouse chitinase.</title>
        <authorList>
            <person name="Price P.A."/>
            <person name="Harris S.C."/>
            <person name="Williamson M.K."/>
        </authorList>
    </citation>
    <scope>NUCLEOTIDE SEQUENCE [MRNA] OF 2-473</scope>
    <source>
        <tissue>Skin</tissue>
    </source>
</reference>
<reference key="8">
    <citation type="journal article" date="2002" name="J. Histochem. Cytochem.">
        <title>Cellular expression of gut chitinase mRNA in the gastrointestinal tract of mice and chickens.</title>
        <authorList>
            <person name="Suzuki M."/>
            <person name="Fujimoto W."/>
            <person name="Goto M."/>
            <person name="Morimatsu M."/>
            <person name="Syuto B."/>
            <person name="Iwanaga T."/>
        </authorList>
    </citation>
    <scope>FUNCTION</scope>
    <scope>TISSUE SPECIFICITY</scope>
    <scope>DEVELOPMENTAL STAGE</scope>
</reference>
<reference key="9">
    <citation type="journal article" date="2003" name="Arch. Oral Biol.">
        <title>Immunohistochemical demonstration of acidic mammalian chitinase in the mouse salivary gland and gastric mucosa.</title>
        <authorList>
            <person name="Goto M."/>
            <person name="Fujimoto W."/>
            <person name="Nio J."/>
            <person name="Iwanaga T."/>
            <person name="Kawasaki T."/>
        </authorList>
    </citation>
    <scope>SUBCELLULAR LOCATION</scope>
    <scope>TISSUE SPECIFICITY</scope>
</reference>
<reference key="10">
    <citation type="journal article" date="2004" name="Science">
        <title>Acidic mammalian chitinase in asthmatic Th2 inflammation and IL-13 pathway activation.</title>
        <authorList>
            <person name="Zhu Z."/>
            <person name="Zheng T."/>
            <person name="Homer R.J."/>
            <person name="Kim Y.K."/>
            <person name="Chen N.Y."/>
            <person name="Cohn L."/>
            <person name="Hamid Q."/>
            <person name="Elias J.A."/>
        </authorList>
    </citation>
    <scope>FUNCTION</scope>
    <scope>INDUCTION</scope>
    <scope>TISSUE SPECIFICITY</scope>
</reference>
<reference key="11">
    <citation type="journal article" date="2008" name="FEBS Lett.">
        <title>A single histidine residue modulates enzymatic activity in acidic mammalian chitinase.</title>
        <authorList>
            <person name="Bussink A.P."/>
            <person name="Vreede J."/>
            <person name="Aerts J.M."/>
            <person name="Boot R.G."/>
        </authorList>
    </citation>
    <scope>MUTAGENESIS OF HIS-208</scope>
    <scope>CATALYTIC ACTIVITY</scope>
    <scope>BIOPHYSICOCHEMICAL PROPERTIES</scope>
</reference>
<reference key="12">
    <citation type="journal article" date="2008" name="J. Biol. Chem.">
        <title>Acidic mammalian chitinase is secreted via an ADAM17/epidermal growth factor receptor-dependent pathway and stimulates chemokine production by pulmonary epithelial cells.</title>
        <authorList>
            <person name="Hartl D."/>
            <person name="He C.H."/>
            <person name="Koller B."/>
            <person name="Da Silva C.A."/>
            <person name="Homer R."/>
            <person name="Lee C.G."/>
            <person name="Elias J.A."/>
        </authorList>
    </citation>
    <scope>SUBCELLULAR LOCATION</scope>
    <scope>TISSUE SPECIFICITY</scope>
</reference>
<reference key="13">
    <citation type="journal article" date="2009" name="Clin. Exp. Dermatol.">
        <title>Expression, purification and in vitro antifungal activity of acidic mammalian chitinase against Candida albicans, Aspergillus fumigatus and Trichophyton rubrum strains.</title>
        <authorList>
            <person name="Chen L."/>
            <person name="Shen Z."/>
            <person name="Wu J."/>
        </authorList>
    </citation>
    <scope>FUNCTION</scope>
</reference>
<reference key="14">
    <citation type="journal article" date="2010" name="Cell">
        <title>A tissue-specific atlas of mouse protein phosphorylation and expression.</title>
        <authorList>
            <person name="Huttlin E.L."/>
            <person name="Jedrychowski M.P."/>
            <person name="Elias J.E."/>
            <person name="Goswami T."/>
            <person name="Rad R."/>
            <person name="Beausoleil S.A."/>
            <person name="Villen J."/>
            <person name="Haas W."/>
            <person name="Sowa M.E."/>
            <person name="Gygi S.P."/>
        </authorList>
    </citation>
    <scope>IDENTIFICATION BY MASS SPECTROMETRY [LARGE SCALE ANALYSIS]</scope>
    <source>
        <tissue>Kidney</tissue>
        <tissue>Lung</tissue>
    </source>
</reference>
<name>CHIA_MOUSE</name>
<organism>
    <name type="scientific">Mus musculus</name>
    <name type="common">Mouse</name>
    <dbReference type="NCBI Taxonomy" id="10090"/>
    <lineage>
        <taxon>Eukaryota</taxon>
        <taxon>Metazoa</taxon>
        <taxon>Chordata</taxon>
        <taxon>Craniata</taxon>
        <taxon>Vertebrata</taxon>
        <taxon>Euteleostomi</taxon>
        <taxon>Mammalia</taxon>
        <taxon>Eutheria</taxon>
        <taxon>Euarchontoglires</taxon>
        <taxon>Glires</taxon>
        <taxon>Rodentia</taxon>
        <taxon>Myomorpha</taxon>
        <taxon>Muroidea</taxon>
        <taxon>Muridae</taxon>
        <taxon>Murinae</taxon>
        <taxon>Mus</taxon>
        <taxon>Mus</taxon>
    </lineage>
</organism>
<accession>Q91XA9</accession>
<accession>A0T468</accession>
<accession>B8K282</accession>
<accession>Q3TVE7</accession>
<accession>Q99PH2</accession>
<accession>Q9D803</accession>
<accession>Q9JLN1</accession>
<proteinExistence type="evidence at protein level"/>
<comment type="function">
    <text evidence="5 6 8 11">Degrades chitin and chitotriose. May participate in the defense against nematodes, fungi and other pathogens. Plays a role in T-helper cell type 2 (Th2) immune response. Contributes to the response to IL-13 and inflammation in response to IL-13. Stimulates chemokine production by pulmonary epithelial cells. Protects lung epithelial cells against apoptosis and promotes phosphorylation of AKT1. Its function in the inflammatory response and in protecting cells against apoptosis is inhibited by allosamidin, suggesting that the function of this protein depends on carbohydrate binding. Presence in saliva and gastric juice suggests a function as a digestive enzyme.</text>
</comment>
<comment type="catalytic activity">
    <reaction evidence="9">
        <text>Random endo-hydrolysis of N-acetyl-beta-D-glucosaminide (1-&gt;4)-beta-linkages in chitin and chitodextrins.</text>
        <dbReference type="EC" id="3.2.1.14"/>
    </reaction>
</comment>
<comment type="biophysicochemical properties">
    <phDependence>
        <text evidence="9">Optimum pH is below 2.5.</text>
    </phDependence>
</comment>
<comment type="subunit">
    <text evidence="1">Interacts with EGFR.</text>
</comment>
<comment type="subcellular location">
    <subcellularLocation>
        <location>Secreted</location>
    </subcellularLocation>
    <subcellularLocation>
        <location>Cytoplasm</location>
    </subcellularLocation>
    <subcellularLocation>
        <location>Cytoplasmic granule</location>
    </subcellularLocation>
    <text>Detected in secretory granules of parotid acinar cells and gastric chief cells and secreted from them into saliva and gastric juice, respectively.</text>
</comment>
<comment type="tissue specificity">
    <text evidence="5 6 7 8 10">Detected in macrophages and lung epithelial cells. Detected in the acinar cells of parotid gland and von Ebner's gland but not in submandibular and sublingual glands. Detected in gastric chief cells. Also present in parotid glandular saliva and gastric juice (at protein level). Highly expressed in submandibular gland (PubMed:11085997) and stomach. Highly expressed in parotid gland but not in submandibular and sublingual glands (PubMed:12133911). In tongue, expressed only in von Ebner's gland. Expressed at lower levels in lung.</text>
</comment>
<comment type="developmental stage">
    <text evidence="6">In parotid gland, weak expression detected at postnatal day P12, with levels increasing towards P16. In stomach, first detected at P16, with expression reaching adult levels during P20-24.</text>
</comment>
<comment type="induction">
    <text evidence="8">Up-regulated upon pulmonary inflammation elicited by sensitization and aerosol challenge with the aeroallergen ovalbumin. Up-regulated during T-helper cell type 2 (Th2) inflammation. Induction is mediated by IL-13.</text>
</comment>
<comment type="similarity">
    <text evidence="12">Belongs to the glycosyl hydrolase 18 family. Chitinase class II subfamily.</text>
</comment>
<comment type="sequence caution" evidence="12">
    <conflict type="erroneous initiation">
        <sequence resource="EMBL-CDS" id="AAH11134"/>
    </conflict>
    <text>Truncated N-terminus.</text>
</comment>